<keyword id="KW-0169">Cobalamin biosynthesis</keyword>
<keyword id="KW-0489">Methyltransferase</keyword>
<keyword id="KW-0949">S-adenosyl-L-methionine</keyword>
<keyword id="KW-0808">Transferase</keyword>
<name>CBID_VARPS</name>
<accession>C5CPF1</accession>
<organism>
    <name type="scientific">Variovorax paradoxus (strain S110)</name>
    <dbReference type="NCBI Taxonomy" id="543728"/>
    <lineage>
        <taxon>Bacteria</taxon>
        <taxon>Pseudomonadati</taxon>
        <taxon>Pseudomonadota</taxon>
        <taxon>Betaproteobacteria</taxon>
        <taxon>Burkholderiales</taxon>
        <taxon>Comamonadaceae</taxon>
        <taxon>Variovorax</taxon>
    </lineage>
</organism>
<protein>
    <recommendedName>
        <fullName evidence="1">Cobalt-precorrin-5B C(1)-methyltransferase</fullName>
        <ecNumber evidence="1">2.1.1.195</ecNumber>
    </recommendedName>
    <alternativeName>
        <fullName evidence="1">Cobalt-precorrin-6A synthase</fullName>
    </alternativeName>
</protein>
<reference key="1">
    <citation type="journal article" date="2011" name="J. Bacteriol.">
        <title>Complete genome sequence of the metabolically versatile plant growth-promoting endophyte, Variovorax paradoxus S110.</title>
        <authorList>
            <person name="Han J.I."/>
            <person name="Choi H.K."/>
            <person name="Lee S.W."/>
            <person name="Orwin P.M."/>
            <person name="Kim J."/>
            <person name="Laroe S.L."/>
            <person name="Kim T.G."/>
            <person name="O'Neil J."/>
            <person name="Leadbetter J.R."/>
            <person name="Lee S.Y."/>
            <person name="Hur C.G."/>
            <person name="Spain J.C."/>
            <person name="Ovchinnikova G."/>
            <person name="Goodwin L."/>
            <person name="Han C."/>
        </authorList>
    </citation>
    <scope>NUCLEOTIDE SEQUENCE [LARGE SCALE GENOMIC DNA]</scope>
    <source>
        <strain>S110</strain>
    </source>
</reference>
<comment type="function">
    <text evidence="1">Catalyzes the methylation of C-1 in cobalt-precorrin-5B to form cobalt-precorrin-6A.</text>
</comment>
<comment type="catalytic activity">
    <reaction evidence="1">
        <text>Co-precorrin-5B + S-adenosyl-L-methionine = Co-precorrin-6A + S-adenosyl-L-homocysteine</text>
        <dbReference type="Rhea" id="RHEA:26285"/>
        <dbReference type="ChEBI" id="CHEBI:57856"/>
        <dbReference type="ChEBI" id="CHEBI:59789"/>
        <dbReference type="ChEBI" id="CHEBI:60063"/>
        <dbReference type="ChEBI" id="CHEBI:60064"/>
        <dbReference type="EC" id="2.1.1.195"/>
    </reaction>
</comment>
<comment type="pathway">
    <text evidence="1">Cofactor biosynthesis; adenosylcobalamin biosynthesis; cob(II)yrinate a,c-diamide from sirohydrochlorin (anaerobic route): step 6/10.</text>
</comment>
<comment type="similarity">
    <text evidence="1">Belongs to the CbiD family.</text>
</comment>
<sequence>MMDKGAPRGTRTGFTTGACSAAAARAAVIGLVTGQVPDHVECLLPNGDLVRFAVHDGRVDSASAHAMVIKDAGDDPDCTDKAHLTADVRLLPDLAGQVVLAGGTGVGTVTMPGLGLAVGGPAINPVPRRNIEANVRAVGAALLDEVGLEVAISVPQGEEMAKKTLNARLGILGGISILGTTGIVKPYSTAAYRASVVQGVQVAGTLGHGVVVLTTGGRTEKFVMAEMPELPEPAFVQMGDFLRYAMGAAVKAGIRKVVIGGMVGKLTKIAQGETITHAGRAEVDTGLLADLAAGLGAPPDVCDAIRGNETARYAGERMDALGLGTAFHTALAQRVIQTLRTRYPDQFELKVLVCDFEGRKIAEAP</sequence>
<gene>
    <name evidence="1" type="primary">cbiD</name>
    <name type="ordered locus">Vapar_1021</name>
</gene>
<feature type="chain" id="PRO_1000212947" description="Cobalt-precorrin-5B C(1)-methyltransferase">
    <location>
        <begin position="1"/>
        <end position="365"/>
    </location>
</feature>
<proteinExistence type="inferred from homology"/>
<dbReference type="EC" id="2.1.1.195" evidence="1"/>
<dbReference type="EMBL" id="CP001635">
    <property type="protein sequence ID" value="ACS17672.1"/>
    <property type="molecule type" value="Genomic_DNA"/>
</dbReference>
<dbReference type="SMR" id="C5CPF1"/>
<dbReference type="STRING" id="543728.Vapar_1021"/>
<dbReference type="KEGG" id="vap:Vapar_1021"/>
<dbReference type="eggNOG" id="COG1903">
    <property type="taxonomic scope" value="Bacteria"/>
</dbReference>
<dbReference type="HOGENOM" id="CLU_041273_0_0_4"/>
<dbReference type="OrthoDB" id="6439987at2"/>
<dbReference type="UniPathway" id="UPA00148">
    <property type="reaction ID" value="UER00227"/>
</dbReference>
<dbReference type="GO" id="GO:0043780">
    <property type="term" value="F:cobalt-precorrin-5B C1-methyltransferase activity"/>
    <property type="evidence" value="ECO:0007669"/>
    <property type="project" value="RHEA"/>
</dbReference>
<dbReference type="GO" id="GO:0019251">
    <property type="term" value="P:anaerobic cobalamin biosynthetic process"/>
    <property type="evidence" value="ECO:0007669"/>
    <property type="project" value="UniProtKB-UniRule"/>
</dbReference>
<dbReference type="GO" id="GO:0032259">
    <property type="term" value="P:methylation"/>
    <property type="evidence" value="ECO:0007669"/>
    <property type="project" value="UniProtKB-KW"/>
</dbReference>
<dbReference type="Gene3D" id="3.30.2110.10">
    <property type="entry name" value="CbiD-like"/>
    <property type="match status" value="1"/>
</dbReference>
<dbReference type="HAMAP" id="MF_00787">
    <property type="entry name" value="CbiD"/>
    <property type="match status" value="1"/>
</dbReference>
<dbReference type="InterPro" id="IPR002748">
    <property type="entry name" value="CbiD"/>
</dbReference>
<dbReference type="InterPro" id="IPR036074">
    <property type="entry name" value="CbiD_sf"/>
</dbReference>
<dbReference type="NCBIfam" id="TIGR00312">
    <property type="entry name" value="cbiD"/>
    <property type="match status" value="1"/>
</dbReference>
<dbReference type="NCBIfam" id="NF000849">
    <property type="entry name" value="PRK00075.1-1"/>
    <property type="match status" value="1"/>
</dbReference>
<dbReference type="PANTHER" id="PTHR35863">
    <property type="entry name" value="COBALT-PRECORRIN-5B C(1)-METHYLTRANSFERASE"/>
    <property type="match status" value="1"/>
</dbReference>
<dbReference type="PANTHER" id="PTHR35863:SF1">
    <property type="entry name" value="COBALT-PRECORRIN-5B C(1)-METHYLTRANSFERASE"/>
    <property type="match status" value="1"/>
</dbReference>
<dbReference type="Pfam" id="PF01888">
    <property type="entry name" value="CbiD"/>
    <property type="match status" value="1"/>
</dbReference>
<dbReference type="PIRSF" id="PIRSF026782">
    <property type="entry name" value="CbiD"/>
    <property type="match status" value="1"/>
</dbReference>
<dbReference type="SUPFAM" id="SSF111342">
    <property type="entry name" value="CbiD-like"/>
    <property type="match status" value="1"/>
</dbReference>
<evidence type="ECO:0000255" key="1">
    <source>
        <dbReference type="HAMAP-Rule" id="MF_00787"/>
    </source>
</evidence>